<gene>
    <name type="ORF">DDB_G0271888</name>
</gene>
<proteinExistence type="predicted"/>
<reference key="1">
    <citation type="journal article" date="2002" name="Nature">
        <title>Sequence and analysis of chromosome 2 of Dictyostelium discoideum.</title>
        <authorList>
            <person name="Gloeckner G."/>
            <person name="Eichinger L."/>
            <person name="Szafranski K."/>
            <person name="Pachebat J.A."/>
            <person name="Bankier A.T."/>
            <person name="Dear P.H."/>
            <person name="Lehmann R."/>
            <person name="Baumgart C."/>
            <person name="Parra G."/>
            <person name="Abril J.F."/>
            <person name="Guigo R."/>
            <person name="Kumpf K."/>
            <person name="Tunggal B."/>
            <person name="Cox E.C."/>
            <person name="Quail M.A."/>
            <person name="Platzer M."/>
            <person name="Rosenthal A."/>
            <person name="Noegel A.A."/>
        </authorList>
    </citation>
    <scope>NUCLEOTIDE SEQUENCE [LARGE SCALE GENOMIC DNA]</scope>
    <source>
        <strain>AX4</strain>
    </source>
</reference>
<reference key="2">
    <citation type="journal article" date="2005" name="Nature">
        <title>The genome of the social amoeba Dictyostelium discoideum.</title>
        <authorList>
            <person name="Eichinger L."/>
            <person name="Pachebat J.A."/>
            <person name="Gloeckner G."/>
            <person name="Rajandream M.A."/>
            <person name="Sucgang R."/>
            <person name="Berriman M."/>
            <person name="Song J."/>
            <person name="Olsen R."/>
            <person name="Szafranski K."/>
            <person name="Xu Q."/>
            <person name="Tunggal B."/>
            <person name="Kummerfeld S."/>
            <person name="Madera M."/>
            <person name="Konfortov B.A."/>
            <person name="Rivero F."/>
            <person name="Bankier A.T."/>
            <person name="Lehmann R."/>
            <person name="Hamlin N."/>
            <person name="Davies R."/>
            <person name="Gaudet P."/>
            <person name="Fey P."/>
            <person name="Pilcher K."/>
            <person name="Chen G."/>
            <person name="Saunders D."/>
            <person name="Sodergren E.J."/>
            <person name="Davis P."/>
            <person name="Kerhornou A."/>
            <person name="Nie X."/>
            <person name="Hall N."/>
            <person name="Anjard C."/>
            <person name="Hemphill L."/>
            <person name="Bason N."/>
            <person name="Farbrother P."/>
            <person name="Desany B."/>
            <person name="Just E."/>
            <person name="Morio T."/>
            <person name="Rost R."/>
            <person name="Churcher C.M."/>
            <person name="Cooper J."/>
            <person name="Haydock S."/>
            <person name="van Driessche N."/>
            <person name="Cronin A."/>
            <person name="Goodhead I."/>
            <person name="Muzny D.M."/>
            <person name="Mourier T."/>
            <person name="Pain A."/>
            <person name="Lu M."/>
            <person name="Harper D."/>
            <person name="Lindsay R."/>
            <person name="Hauser H."/>
            <person name="James K.D."/>
            <person name="Quiles M."/>
            <person name="Madan Babu M."/>
            <person name="Saito T."/>
            <person name="Buchrieser C."/>
            <person name="Wardroper A."/>
            <person name="Felder M."/>
            <person name="Thangavelu M."/>
            <person name="Johnson D."/>
            <person name="Knights A."/>
            <person name="Loulseged H."/>
            <person name="Mungall K.L."/>
            <person name="Oliver K."/>
            <person name="Price C."/>
            <person name="Quail M.A."/>
            <person name="Urushihara H."/>
            <person name="Hernandez J."/>
            <person name="Rabbinowitsch E."/>
            <person name="Steffen D."/>
            <person name="Sanders M."/>
            <person name="Ma J."/>
            <person name="Kohara Y."/>
            <person name="Sharp S."/>
            <person name="Simmonds M.N."/>
            <person name="Spiegler S."/>
            <person name="Tivey A."/>
            <person name="Sugano S."/>
            <person name="White B."/>
            <person name="Walker D."/>
            <person name="Woodward J.R."/>
            <person name="Winckler T."/>
            <person name="Tanaka Y."/>
            <person name="Shaulsky G."/>
            <person name="Schleicher M."/>
            <person name="Weinstock G.M."/>
            <person name="Rosenthal A."/>
            <person name="Cox E.C."/>
            <person name="Chisholm R.L."/>
            <person name="Gibbs R.A."/>
            <person name="Loomis W.F."/>
            <person name="Platzer M."/>
            <person name="Kay R.R."/>
            <person name="Williams J.G."/>
            <person name="Dear P.H."/>
            <person name="Noegel A.A."/>
            <person name="Barrell B.G."/>
            <person name="Kuspa A."/>
        </authorList>
    </citation>
    <scope>NUCLEOTIDE SEQUENCE [LARGE SCALE GENOMIC DNA]</scope>
    <source>
        <strain>AX4</strain>
    </source>
</reference>
<dbReference type="EMBL" id="AAFI02000007">
    <property type="protein sequence ID" value="EAL71468.1"/>
    <property type="molecule type" value="Genomic_DNA"/>
</dbReference>
<dbReference type="RefSeq" id="XP_645408.1">
    <property type="nucleotide sequence ID" value="XM_640316.1"/>
</dbReference>
<dbReference type="PaxDb" id="44689-DDB0168561"/>
<dbReference type="EnsemblProtists" id="EAL71468">
    <property type="protein sequence ID" value="EAL71468"/>
    <property type="gene ID" value="DDB_G0271888"/>
</dbReference>
<dbReference type="GeneID" id="8618212"/>
<dbReference type="KEGG" id="ddi:DDB_G0271888"/>
<dbReference type="dictyBase" id="DDB_G0271888"/>
<dbReference type="HOGENOM" id="CLU_2692954_0_0_1"/>
<dbReference type="InParanoid" id="Q86I89"/>
<dbReference type="PRO" id="PR:Q86I89"/>
<dbReference type="Proteomes" id="UP000002195">
    <property type="component" value="Chromosome 2"/>
</dbReference>
<sequence length="74" mass="7912">MTISGSFSSFGTTNSLNVKNNQNHFLSTSPNLNGNSILSSSFGGSSSFQNSNYLIASVNSTVITESFKLLDNPW</sequence>
<keyword id="KW-1185">Reference proteome</keyword>
<accession>Q86I89</accession>
<accession>Q55AE6</accession>
<protein>
    <recommendedName>
        <fullName>Uncharacterized protein DDB_G0271888</fullName>
    </recommendedName>
</protein>
<name>Y8561_DICDI</name>
<organism>
    <name type="scientific">Dictyostelium discoideum</name>
    <name type="common">Social amoeba</name>
    <dbReference type="NCBI Taxonomy" id="44689"/>
    <lineage>
        <taxon>Eukaryota</taxon>
        <taxon>Amoebozoa</taxon>
        <taxon>Evosea</taxon>
        <taxon>Eumycetozoa</taxon>
        <taxon>Dictyostelia</taxon>
        <taxon>Dictyosteliales</taxon>
        <taxon>Dictyosteliaceae</taxon>
        <taxon>Dictyostelium</taxon>
    </lineage>
</organism>
<feature type="chain" id="PRO_0000348163" description="Uncharacterized protein DDB_G0271888">
    <location>
        <begin position="1"/>
        <end position="74"/>
    </location>
</feature>